<evidence type="ECO:0000255" key="1">
    <source>
        <dbReference type="HAMAP-Rule" id="MF_00818"/>
    </source>
</evidence>
<proteinExistence type="inferred from homology"/>
<gene>
    <name evidence="1" type="primary">queF</name>
    <name type="ordered locus">Syncc9902_0471</name>
</gene>
<organism>
    <name type="scientific">Synechococcus sp. (strain CC9902)</name>
    <dbReference type="NCBI Taxonomy" id="316279"/>
    <lineage>
        <taxon>Bacteria</taxon>
        <taxon>Bacillati</taxon>
        <taxon>Cyanobacteriota</taxon>
        <taxon>Cyanophyceae</taxon>
        <taxon>Synechococcales</taxon>
        <taxon>Synechococcaceae</taxon>
        <taxon>Synechococcus</taxon>
    </lineage>
</organism>
<dbReference type="EC" id="1.7.1.13" evidence="1"/>
<dbReference type="EMBL" id="CP000097">
    <property type="protein sequence ID" value="ABB25439.1"/>
    <property type="molecule type" value="Genomic_DNA"/>
</dbReference>
<dbReference type="RefSeq" id="WP_011359290.1">
    <property type="nucleotide sequence ID" value="NC_007513.1"/>
</dbReference>
<dbReference type="SMR" id="Q3AZN8"/>
<dbReference type="STRING" id="316279.Syncc9902_0471"/>
<dbReference type="KEGG" id="sye:Syncc9902_0471"/>
<dbReference type="eggNOG" id="COG0780">
    <property type="taxonomic scope" value="Bacteria"/>
</dbReference>
<dbReference type="HOGENOM" id="CLU_102489_1_1_3"/>
<dbReference type="OrthoDB" id="9795077at2"/>
<dbReference type="UniPathway" id="UPA00392"/>
<dbReference type="Proteomes" id="UP000002712">
    <property type="component" value="Chromosome"/>
</dbReference>
<dbReference type="GO" id="GO:0005737">
    <property type="term" value="C:cytoplasm"/>
    <property type="evidence" value="ECO:0007669"/>
    <property type="project" value="UniProtKB-SubCell"/>
</dbReference>
<dbReference type="GO" id="GO:0033739">
    <property type="term" value="F:preQ1 synthase activity"/>
    <property type="evidence" value="ECO:0007669"/>
    <property type="project" value="UniProtKB-UniRule"/>
</dbReference>
<dbReference type="GO" id="GO:0008616">
    <property type="term" value="P:queuosine biosynthetic process"/>
    <property type="evidence" value="ECO:0007669"/>
    <property type="project" value="UniProtKB-UniRule"/>
</dbReference>
<dbReference type="GO" id="GO:0006400">
    <property type="term" value="P:tRNA modification"/>
    <property type="evidence" value="ECO:0007669"/>
    <property type="project" value="UniProtKB-UniRule"/>
</dbReference>
<dbReference type="Gene3D" id="3.30.1130.10">
    <property type="match status" value="1"/>
</dbReference>
<dbReference type="HAMAP" id="MF_00818">
    <property type="entry name" value="QueF_type1"/>
    <property type="match status" value="1"/>
</dbReference>
<dbReference type="InterPro" id="IPR043133">
    <property type="entry name" value="GTP-CH-I_C/QueF"/>
</dbReference>
<dbReference type="InterPro" id="IPR050084">
    <property type="entry name" value="NADPH_dep_7-cyano-7-deazaG_red"/>
</dbReference>
<dbReference type="InterPro" id="IPR029500">
    <property type="entry name" value="QueF"/>
</dbReference>
<dbReference type="InterPro" id="IPR016856">
    <property type="entry name" value="QueF_type1"/>
</dbReference>
<dbReference type="NCBIfam" id="TIGR03139">
    <property type="entry name" value="QueF-II"/>
    <property type="match status" value="1"/>
</dbReference>
<dbReference type="PANTHER" id="PTHR34354">
    <property type="entry name" value="NADPH-DEPENDENT 7-CYANO-7-DEAZAGUANINE REDUCTASE"/>
    <property type="match status" value="1"/>
</dbReference>
<dbReference type="PANTHER" id="PTHR34354:SF1">
    <property type="entry name" value="NADPH-DEPENDENT 7-CYANO-7-DEAZAGUANINE REDUCTASE"/>
    <property type="match status" value="1"/>
</dbReference>
<dbReference type="Pfam" id="PF14489">
    <property type="entry name" value="QueF"/>
    <property type="match status" value="1"/>
</dbReference>
<dbReference type="PIRSF" id="PIRSF027377">
    <property type="entry name" value="Nitrile_oxidored_QueF"/>
    <property type="match status" value="1"/>
</dbReference>
<dbReference type="SUPFAM" id="SSF55620">
    <property type="entry name" value="Tetrahydrobiopterin biosynthesis enzymes-like"/>
    <property type="match status" value="1"/>
</dbReference>
<comment type="function">
    <text evidence="1">Catalyzes the NADPH-dependent reduction of 7-cyano-7-deazaguanine (preQ0) to 7-aminomethyl-7-deazaguanine (preQ1).</text>
</comment>
<comment type="catalytic activity">
    <reaction evidence="1">
        <text>7-aminomethyl-7-carbaguanine + 2 NADP(+) = 7-cyano-7-deazaguanine + 2 NADPH + 3 H(+)</text>
        <dbReference type="Rhea" id="RHEA:13409"/>
        <dbReference type="ChEBI" id="CHEBI:15378"/>
        <dbReference type="ChEBI" id="CHEBI:45075"/>
        <dbReference type="ChEBI" id="CHEBI:57783"/>
        <dbReference type="ChEBI" id="CHEBI:58349"/>
        <dbReference type="ChEBI" id="CHEBI:58703"/>
        <dbReference type="EC" id="1.7.1.13"/>
    </reaction>
</comment>
<comment type="pathway">
    <text evidence="1">tRNA modification; tRNA-queuosine biosynthesis.</text>
</comment>
<comment type="subcellular location">
    <subcellularLocation>
        <location evidence="1">Cytoplasm</location>
    </subcellularLocation>
</comment>
<comment type="similarity">
    <text evidence="1">Belongs to the GTP cyclohydrolase I family. QueF type 1 subfamily.</text>
</comment>
<name>QUEF_SYNS9</name>
<sequence length="137" mass="15454">MTGAASQQQTETPLYGERAIDEAELICFDNPRPGRAYEVSIELPEFTCKCPFSGYPDFAVLRLIYQPGPRVVELKAIKLYVNSYRDRSISHEEVSNRIVDDLVAACDPVWLQLEADFNPRGNVHTVVRVSHGTRQPC</sequence>
<accession>Q3AZN8</accession>
<reference key="1">
    <citation type="submission" date="2005-08" db="EMBL/GenBank/DDBJ databases">
        <title>Complete sequence of Synechococcus sp. CC9902.</title>
        <authorList>
            <person name="Copeland A."/>
            <person name="Lucas S."/>
            <person name="Lapidus A."/>
            <person name="Barry K."/>
            <person name="Detter J.C."/>
            <person name="Glavina T."/>
            <person name="Hammon N."/>
            <person name="Israni S."/>
            <person name="Pitluck S."/>
            <person name="Martinez M."/>
            <person name="Schmutz J."/>
            <person name="Larimer F."/>
            <person name="Land M."/>
            <person name="Kyrpides N."/>
            <person name="Ivanova N."/>
            <person name="Richardson P."/>
        </authorList>
    </citation>
    <scope>NUCLEOTIDE SEQUENCE [LARGE SCALE GENOMIC DNA]</scope>
    <source>
        <strain>CC9902</strain>
    </source>
</reference>
<keyword id="KW-0963">Cytoplasm</keyword>
<keyword id="KW-0521">NADP</keyword>
<keyword id="KW-0560">Oxidoreductase</keyword>
<keyword id="KW-0671">Queuosine biosynthesis</keyword>
<keyword id="KW-1185">Reference proteome</keyword>
<feature type="chain" id="PRO_0000247698" description="NADPH-dependent 7-cyano-7-deazaguanine reductase">
    <location>
        <begin position="1"/>
        <end position="137"/>
    </location>
</feature>
<feature type="active site" description="Thioimide intermediate" evidence="1">
    <location>
        <position position="50"/>
    </location>
</feature>
<feature type="active site" description="Proton donor" evidence="1">
    <location>
        <position position="57"/>
    </location>
</feature>
<feature type="binding site" evidence="1">
    <location>
        <begin position="72"/>
        <end position="74"/>
    </location>
    <ligand>
        <name>substrate</name>
    </ligand>
</feature>
<feature type="binding site" evidence="1">
    <location>
        <begin position="91"/>
        <end position="92"/>
    </location>
    <ligand>
        <name>substrate</name>
    </ligand>
</feature>
<protein>
    <recommendedName>
        <fullName evidence="1">NADPH-dependent 7-cyano-7-deazaguanine reductase</fullName>
        <ecNumber evidence="1">1.7.1.13</ecNumber>
    </recommendedName>
    <alternativeName>
        <fullName evidence="1">7-cyano-7-carbaguanine reductase</fullName>
    </alternativeName>
    <alternativeName>
        <fullName evidence="1">NADPH-dependent nitrile oxidoreductase</fullName>
    </alternativeName>
    <alternativeName>
        <fullName evidence="1">PreQ(0) reductase</fullName>
    </alternativeName>
</protein>